<keyword id="KW-0007">Acetylation</keyword>
<keyword id="KW-0507">mRNA processing</keyword>
<keyword id="KW-0508">mRNA splicing</keyword>
<keyword id="KW-1185">Reference proteome</keyword>
<keyword id="KW-0747">Spliceosome</keyword>
<proteinExistence type="evidence at transcript level"/>
<accession>O77682</accession>
<gene>
    <name type="primary">AAR2</name>
</gene>
<protein>
    <recommendedName>
        <fullName>Protein AAR2 homolog</fullName>
    </recommendedName>
    <alternativeName>
        <fullName>AAR2 splicing factor homolog</fullName>
    </alternativeName>
</protein>
<organism>
    <name type="scientific">Oryctolagus cuniculus</name>
    <name type="common">Rabbit</name>
    <dbReference type="NCBI Taxonomy" id="9986"/>
    <lineage>
        <taxon>Eukaryota</taxon>
        <taxon>Metazoa</taxon>
        <taxon>Chordata</taxon>
        <taxon>Craniata</taxon>
        <taxon>Vertebrata</taxon>
        <taxon>Euteleostomi</taxon>
        <taxon>Mammalia</taxon>
        <taxon>Eutheria</taxon>
        <taxon>Euarchontoglires</taxon>
        <taxon>Glires</taxon>
        <taxon>Lagomorpha</taxon>
        <taxon>Leporidae</taxon>
        <taxon>Oryctolagus</taxon>
    </lineage>
</organism>
<feature type="initiator methionine" description="Removed" evidence="2">
    <location>
        <position position="1"/>
    </location>
</feature>
<feature type="chain" id="PRO_0000209708" description="Protein AAR2 homolog">
    <location>
        <begin position="2"/>
        <end position="337"/>
    </location>
</feature>
<feature type="modified residue" description="N-acetylalanine" evidence="2">
    <location>
        <position position="2"/>
    </location>
</feature>
<name>AAR2_RABIT</name>
<reference key="1">
    <citation type="submission" date="1998-07" db="EMBL/GenBank/DDBJ databases">
        <authorList>
            <person name="Shepard A.R."/>
            <person name="Rae J.L."/>
        </authorList>
    </citation>
    <scope>NUCLEOTIDE SEQUENCE [MRNA]</scope>
    <source>
        <tissue>Cornea</tissue>
    </source>
</reference>
<sequence length="337" mass="37802">MAAMQMDPELAKCLFFEGATVVILNMPKGTEFGIDYNSWEVGPKFRGVKMIPPGIHFLHYSAVDKANLQELDQFLGPYPYATLKKWISLTSFISEATVERLQPESRQICAFSDVLPVLAMKHTKDRVGQNLPQCGTECKSYQEGLARLPEMKPRAGTEIRFSELPTQMFPAGATPAEITRHSMDLSYALEMVLGRQFPGSPQDVLGELQFAFVCFLLGNVYEAFEHWKRLLNLLCRSEAAMVKHHALYVNLISILYHQLGEIPADFFVDIVSQDNFLTSTLQVFFSSACSTAVDATLRKKAEKFQAHLTKKFRWDFAAEPEDCAPVVVELPEGTSTG</sequence>
<dbReference type="EMBL" id="AF078806">
    <property type="protein sequence ID" value="AAC29430.1"/>
    <property type="status" value="ALT_INIT"/>
    <property type="molecule type" value="mRNA"/>
</dbReference>
<dbReference type="SMR" id="O77682"/>
<dbReference type="STRING" id="9986.ENSOCUP00000004760"/>
<dbReference type="InParanoid" id="O77682"/>
<dbReference type="Proteomes" id="UP000001811">
    <property type="component" value="Unplaced"/>
</dbReference>
<dbReference type="GO" id="GO:0005681">
    <property type="term" value="C:spliceosomal complex"/>
    <property type="evidence" value="ECO:0007669"/>
    <property type="project" value="UniProtKB-KW"/>
</dbReference>
<dbReference type="GO" id="GO:0000244">
    <property type="term" value="P:spliceosomal tri-snRNP complex assembly"/>
    <property type="evidence" value="ECO:0007669"/>
    <property type="project" value="TreeGrafter"/>
</dbReference>
<dbReference type="CDD" id="cd13778">
    <property type="entry name" value="Aar2_C"/>
    <property type="match status" value="1"/>
</dbReference>
<dbReference type="CDD" id="cd13777">
    <property type="entry name" value="Aar2_N"/>
    <property type="match status" value="1"/>
</dbReference>
<dbReference type="FunFam" id="1.25.40.550:FF:000001">
    <property type="entry name" value="AAR2 splicing factor homolog"/>
    <property type="match status" value="1"/>
</dbReference>
<dbReference type="Gene3D" id="2.60.34.20">
    <property type="match status" value="2"/>
</dbReference>
<dbReference type="Gene3D" id="1.25.40.550">
    <property type="entry name" value="Aar2, C-terminal domain-like"/>
    <property type="match status" value="1"/>
</dbReference>
<dbReference type="InterPro" id="IPR007946">
    <property type="entry name" value="AAR2"/>
</dbReference>
<dbReference type="InterPro" id="IPR033648">
    <property type="entry name" value="AAR2_C"/>
</dbReference>
<dbReference type="InterPro" id="IPR038514">
    <property type="entry name" value="AAR2_C_sf"/>
</dbReference>
<dbReference type="InterPro" id="IPR033647">
    <property type="entry name" value="Aar2_N"/>
</dbReference>
<dbReference type="InterPro" id="IPR038516">
    <property type="entry name" value="AAR2_N_sf"/>
</dbReference>
<dbReference type="PANTHER" id="PTHR12689">
    <property type="entry name" value="A1 CISTRON SPLICING FACTOR AAR2-RELATED"/>
    <property type="match status" value="1"/>
</dbReference>
<dbReference type="PANTHER" id="PTHR12689:SF4">
    <property type="entry name" value="PROTEIN AAR2 HOMOLOG"/>
    <property type="match status" value="1"/>
</dbReference>
<dbReference type="Pfam" id="PF05282">
    <property type="entry name" value="AAR2"/>
    <property type="match status" value="1"/>
</dbReference>
<dbReference type="Pfam" id="PF20981">
    <property type="entry name" value="AAR2_1st"/>
    <property type="match status" value="2"/>
</dbReference>
<evidence type="ECO:0000250" key="1">
    <source>
        <dbReference type="UniProtKB" id="P32357"/>
    </source>
</evidence>
<evidence type="ECO:0000250" key="2">
    <source>
        <dbReference type="UniProtKB" id="Q9Y312"/>
    </source>
</evidence>
<evidence type="ECO:0000305" key="3"/>
<comment type="function">
    <text evidence="1">Component of the U5 snRNP complex that is required for spliceosome assembly and for pre-mRNA splicing.</text>
</comment>
<comment type="subunit">
    <text evidence="1 2">Interacts with PRPF8 (via RNase H homology domain) (By similarity). Component of a U5 snRNP complex that contains PRPF8 (By similarity).</text>
</comment>
<comment type="similarity">
    <text evidence="3">Belongs to the AAR2 family.</text>
</comment>
<comment type="sequence caution" evidence="3">
    <conflict type="erroneous initiation">
        <sequence resource="EMBL-CDS" id="AAC29430"/>
    </conflict>
</comment>